<accession>B1L869</accession>
<protein>
    <recommendedName>
        <fullName evidence="1">Histidinol-phosphate aminotransferase</fullName>
        <ecNumber evidence="1">2.6.1.9</ecNumber>
    </recommendedName>
    <alternativeName>
        <fullName evidence="1">Imidazole acetol-phosphate transaminase</fullName>
    </alternativeName>
</protein>
<keyword id="KW-0028">Amino-acid biosynthesis</keyword>
<keyword id="KW-0032">Aminotransferase</keyword>
<keyword id="KW-0368">Histidine biosynthesis</keyword>
<keyword id="KW-0663">Pyridoxal phosphate</keyword>
<keyword id="KW-0808">Transferase</keyword>
<reference key="1">
    <citation type="journal article" date="2011" name="J. Bacteriol.">
        <title>Genome sequence of Thermotoga sp. strain RQ2, a hyperthermophilic bacterium isolated from a geothermally heated region of the seafloor near Ribeira Quente, the Azores.</title>
        <authorList>
            <person name="Swithers K.S."/>
            <person name="DiPippo J.L."/>
            <person name="Bruce D.C."/>
            <person name="Detter C."/>
            <person name="Tapia R."/>
            <person name="Han S."/>
            <person name="Saunders E."/>
            <person name="Goodwin L.A."/>
            <person name="Han J."/>
            <person name="Woyke T."/>
            <person name="Pitluck S."/>
            <person name="Pennacchio L."/>
            <person name="Nolan M."/>
            <person name="Mikhailova N."/>
            <person name="Lykidis A."/>
            <person name="Land M.L."/>
            <person name="Brettin T."/>
            <person name="Stetter K.O."/>
            <person name="Nelson K.E."/>
            <person name="Gogarten J.P."/>
            <person name="Noll K.M."/>
        </authorList>
    </citation>
    <scope>NUCLEOTIDE SEQUENCE [LARGE SCALE GENOMIC DNA]</scope>
    <source>
        <strain>RQ2</strain>
    </source>
</reference>
<evidence type="ECO:0000255" key="1">
    <source>
        <dbReference type="HAMAP-Rule" id="MF_01023"/>
    </source>
</evidence>
<name>HIS8_THESQ</name>
<feature type="chain" id="PRO_1000135429" description="Histidinol-phosphate aminotransferase">
    <location>
        <begin position="1"/>
        <end position="335"/>
    </location>
</feature>
<feature type="modified residue" description="N6-(pyridoxal phosphate)lysine" evidence="1">
    <location>
        <position position="202"/>
    </location>
</feature>
<dbReference type="EC" id="2.6.1.9" evidence="1"/>
<dbReference type="EMBL" id="CP000969">
    <property type="protein sequence ID" value="ACB10099.1"/>
    <property type="molecule type" value="Genomic_DNA"/>
</dbReference>
<dbReference type="RefSeq" id="WP_012311330.1">
    <property type="nucleotide sequence ID" value="NC_010483.1"/>
</dbReference>
<dbReference type="SMR" id="B1L869"/>
<dbReference type="KEGG" id="trq:TRQ2_1768"/>
<dbReference type="HOGENOM" id="CLU_017584_3_1_0"/>
<dbReference type="UniPathway" id="UPA00031">
    <property type="reaction ID" value="UER00012"/>
</dbReference>
<dbReference type="Proteomes" id="UP000001687">
    <property type="component" value="Chromosome"/>
</dbReference>
<dbReference type="GO" id="GO:0004400">
    <property type="term" value="F:histidinol-phosphate transaminase activity"/>
    <property type="evidence" value="ECO:0007669"/>
    <property type="project" value="UniProtKB-UniRule"/>
</dbReference>
<dbReference type="GO" id="GO:0030170">
    <property type="term" value="F:pyridoxal phosphate binding"/>
    <property type="evidence" value="ECO:0007669"/>
    <property type="project" value="InterPro"/>
</dbReference>
<dbReference type="GO" id="GO:0000105">
    <property type="term" value="P:L-histidine biosynthetic process"/>
    <property type="evidence" value="ECO:0007669"/>
    <property type="project" value="UniProtKB-UniRule"/>
</dbReference>
<dbReference type="CDD" id="cd00609">
    <property type="entry name" value="AAT_like"/>
    <property type="match status" value="1"/>
</dbReference>
<dbReference type="Gene3D" id="3.90.1150.10">
    <property type="entry name" value="Aspartate Aminotransferase, domain 1"/>
    <property type="match status" value="1"/>
</dbReference>
<dbReference type="Gene3D" id="3.40.640.10">
    <property type="entry name" value="Type I PLP-dependent aspartate aminotransferase-like (Major domain)"/>
    <property type="match status" value="1"/>
</dbReference>
<dbReference type="HAMAP" id="MF_01023">
    <property type="entry name" value="HisC_aminotrans_2"/>
    <property type="match status" value="1"/>
</dbReference>
<dbReference type="InterPro" id="IPR001917">
    <property type="entry name" value="Aminotrans_II_pyridoxalP_BS"/>
</dbReference>
<dbReference type="InterPro" id="IPR004839">
    <property type="entry name" value="Aminotransferase_I/II_large"/>
</dbReference>
<dbReference type="InterPro" id="IPR005861">
    <property type="entry name" value="HisP_aminotrans"/>
</dbReference>
<dbReference type="InterPro" id="IPR050106">
    <property type="entry name" value="HistidinolP_aminotransfase"/>
</dbReference>
<dbReference type="InterPro" id="IPR015424">
    <property type="entry name" value="PyrdxlP-dep_Trfase"/>
</dbReference>
<dbReference type="InterPro" id="IPR015421">
    <property type="entry name" value="PyrdxlP-dep_Trfase_major"/>
</dbReference>
<dbReference type="InterPro" id="IPR015422">
    <property type="entry name" value="PyrdxlP-dep_Trfase_small"/>
</dbReference>
<dbReference type="NCBIfam" id="TIGR01141">
    <property type="entry name" value="hisC"/>
    <property type="match status" value="1"/>
</dbReference>
<dbReference type="PANTHER" id="PTHR43643:SF3">
    <property type="entry name" value="HISTIDINOL-PHOSPHATE AMINOTRANSFERASE"/>
    <property type="match status" value="1"/>
</dbReference>
<dbReference type="PANTHER" id="PTHR43643">
    <property type="entry name" value="HISTIDINOL-PHOSPHATE AMINOTRANSFERASE 2"/>
    <property type="match status" value="1"/>
</dbReference>
<dbReference type="Pfam" id="PF00155">
    <property type="entry name" value="Aminotran_1_2"/>
    <property type="match status" value="1"/>
</dbReference>
<dbReference type="SUPFAM" id="SSF53383">
    <property type="entry name" value="PLP-dependent transferases"/>
    <property type="match status" value="1"/>
</dbReference>
<dbReference type="PROSITE" id="PS00599">
    <property type="entry name" value="AA_TRANSFER_CLASS_2"/>
    <property type="match status" value="1"/>
</dbReference>
<gene>
    <name evidence="1" type="primary">hisC</name>
    <name type="ordered locus">TRQ2_1768</name>
</gene>
<sequence>MNPLDLIAKRAYPYETEKRDKTYLALNENPFPFPEDLVDEVFRRLNSDALRIYYDSPDEELIEKILSYLDTDFLSKNNVSVGNGADEIIYVMMLMFDRSVFFPPTYSCYRIFAKAVGAKFLEVPLTKDLRIPEVNVGEGDVVFIPNPNNPTGHVFEREEIERILKTGAFVALDEAYYEFHGESYVDLLKKYENLAVIRTFSKAFSLAAQRVGYVVASEKFIDAYNRVRLPFNVSYVSQMFAKVALDHREIFEERTKFIVEERERMKSALREMGYRITDSRGNFVFVFMEKEEKERLLEHLRTKNVAVRSFREGVRITIGKREENDMILRELEVFK</sequence>
<organism>
    <name type="scientific">Thermotoga sp. (strain RQ2)</name>
    <dbReference type="NCBI Taxonomy" id="126740"/>
    <lineage>
        <taxon>Bacteria</taxon>
        <taxon>Thermotogati</taxon>
        <taxon>Thermotogota</taxon>
        <taxon>Thermotogae</taxon>
        <taxon>Thermotogales</taxon>
        <taxon>Thermotogaceae</taxon>
        <taxon>Thermotoga</taxon>
    </lineage>
</organism>
<proteinExistence type="inferred from homology"/>
<comment type="catalytic activity">
    <reaction evidence="1">
        <text>L-histidinol phosphate + 2-oxoglutarate = 3-(imidazol-4-yl)-2-oxopropyl phosphate + L-glutamate</text>
        <dbReference type="Rhea" id="RHEA:23744"/>
        <dbReference type="ChEBI" id="CHEBI:16810"/>
        <dbReference type="ChEBI" id="CHEBI:29985"/>
        <dbReference type="ChEBI" id="CHEBI:57766"/>
        <dbReference type="ChEBI" id="CHEBI:57980"/>
        <dbReference type="EC" id="2.6.1.9"/>
    </reaction>
</comment>
<comment type="cofactor">
    <cofactor evidence="1">
        <name>pyridoxal 5'-phosphate</name>
        <dbReference type="ChEBI" id="CHEBI:597326"/>
    </cofactor>
</comment>
<comment type="pathway">
    <text evidence="1">Amino-acid biosynthesis; L-histidine biosynthesis; L-histidine from 5-phospho-alpha-D-ribose 1-diphosphate: step 7/9.</text>
</comment>
<comment type="subunit">
    <text evidence="1">Homodimer.</text>
</comment>
<comment type="similarity">
    <text evidence="1">Belongs to the class-II pyridoxal-phosphate-dependent aminotransferase family. Histidinol-phosphate aminotransferase subfamily.</text>
</comment>